<gene>
    <name type="primary">ndhF</name>
</gene>
<keyword id="KW-0150">Chloroplast</keyword>
<keyword id="KW-0472">Membrane</keyword>
<keyword id="KW-0520">NAD</keyword>
<keyword id="KW-0521">NADP</keyword>
<keyword id="KW-0934">Plastid</keyword>
<keyword id="KW-0618">Plastoquinone</keyword>
<keyword id="KW-0874">Quinone</keyword>
<keyword id="KW-0793">Thylakoid</keyword>
<keyword id="KW-1278">Translocase</keyword>
<keyword id="KW-0812">Transmembrane</keyword>
<keyword id="KW-1133">Transmembrane helix</keyword>
<keyword id="KW-0813">Transport</keyword>
<accession>Q32880</accession>
<dbReference type="EC" id="7.1.1.-"/>
<dbReference type="EMBL" id="U21980">
    <property type="protein sequence ID" value="AAA64698.1"/>
    <property type="molecule type" value="Genomic_DNA"/>
</dbReference>
<dbReference type="PIR" id="T13655">
    <property type="entry name" value="T13655"/>
</dbReference>
<dbReference type="SMR" id="Q32880"/>
<dbReference type="GO" id="GO:0009535">
    <property type="term" value="C:chloroplast thylakoid membrane"/>
    <property type="evidence" value="ECO:0007669"/>
    <property type="project" value="UniProtKB-SubCell"/>
</dbReference>
<dbReference type="GO" id="GO:0008137">
    <property type="term" value="F:NADH dehydrogenase (ubiquinone) activity"/>
    <property type="evidence" value="ECO:0007669"/>
    <property type="project" value="InterPro"/>
</dbReference>
<dbReference type="GO" id="GO:0048038">
    <property type="term" value="F:quinone binding"/>
    <property type="evidence" value="ECO:0007669"/>
    <property type="project" value="UniProtKB-KW"/>
</dbReference>
<dbReference type="GO" id="GO:0042773">
    <property type="term" value="P:ATP synthesis coupled electron transport"/>
    <property type="evidence" value="ECO:0007669"/>
    <property type="project" value="InterPro"/>
</dbReference>
<dbReference type="GO" id="GO:0015990">
    <property type="term" value="P:electron transport coupled proton transport"/>
    <property type="evidence" value="ECO:0007669"/>
    <property type="project" value="TreeGrafter"/>
</dbReference>
<dbReference type="InterPro" id="IPR002128">
    <property type="entry name" value="NADH_UbQ_OxRdtase_chlpt_su5_C"/>
</dbReference>
<dbReference type="InterPro" id="IPR018393">
    <property type="entry name" value="NADHpl_OxRdtase_5_subgr"/>
</dbReference>
<dbReference type="InterPro" id="IPR001750">
    <property type="entry name" value="ND/Mrp_TM"/>
</dbReference>
<dbReference type="InterPro" id="IPR003945">
    <property type="entry name" value="NU5C-like"/>
</dbReference>
<dbReference type="InterPro" id="IPR001516">
    <property type="entry name" value="Proton_antipo_N"/>
</dbReference>
<dbReference type="NCBIfam" id="TIGR01974">
    <property type="entry name" value="NDH_I_L"/>
    <property type="match status" value="1"/>
</dbReference>
<dbReference type="NCBIfam" id="NF005141">
    <property type="entry name" value="PRK06590.1"/>
    <property type="match status" value="1"/>
</dbReference>
<dbReference type="PANTHER" id="PTHR42829">
    <property type="entry name" value="NADH-UBIQUINONE OXIDOREDUCTASE CHAIN 5"/>
    <property type="match status" value="1"/>
</dbReference>
<dbReference type="PANTHER" id="PTHR42829:SF2">
    <property type="entry name" value="NADH-UBIQUINONE OXIDOREDUCTASE CHAIN 5"/>
    <property type="match status" value="1"/>
</dbReference>
<dbReference type="Pfam" id="PF01010">
    <property type="entry name" value="Proton_antipo_C"/>
    <property type="match status" value="1"/>
</dbReference>
<dbReference type="Pfam" id="PF00361">
    <property type="entry name" value="Proton_antipo_M"/>
    <property type="match status" value="1"/>
</dbReference>
<dbReference type="Pfam" id="PF00662">
    <property type="entry name" value="Proton_antipo_N"/>
    <property type="match status" value="1"/>
</dbReference>
<dbReference type="PRINTS" id="PR01434">
    <property type="entry name" value="NADHDHGNASE5"/>
</dbReference>
<dbReference type="PRINTS" id="PR01435">
    <property type="entry name" value="NPOXDRDTASE5"/>
</dbReference>
<feature type="chain" id="PRO_0000118201" description="NAD(P)H-quinone oxidoreductase subunit 5, chloroplastic">
    <location>
        <begin position="1" status="less than"/>
        <end position="702" status="greater than"/>
    </location>
</feature>
<feature type="transmembrane region" description="Helical" evidence="2">
    <location>
        <begin position="1"/>
        <end position="21"/>
    </location>
</feature>
<feature type="transmembrane region" description="Helical" evidence="2">
    <location>
        <begin position="31"/>
        <end position="51"/>
    </location>
</feature>
<feature type="transmembrane region" description="Helical" evidence="2">
    <location>
        <begin position="81"/>
        <end position="101"/>
    </location>
</feature>
<feature type="transmembrane region" description="Helical" evidence="2">
    <location>
        <begin position="117"/>
        <end position="137"/>
    </location>
</feature>
<feature type="transmembrane region" description="Helical" evidence="2">
    <location>
        <begin position="139"/>
        <end position="159"/>
    </location>
</feature>
<feature type="transmembrane region" description="Helical" evidence="2">
    <location>
        <begin position="177"/>
        <end position="197"/>
    </location>
</feature>
<feature type="transmembrane region" description="Helical" evidence="2">
    <location>
        <begin position="211"/>
        <end position="231"/>
    </location>
</feature>
<feature type="transmembrane region" description="Helical" evidence="2">
    <location>
        <begin position="250"/>
        <end position="270"/>
    </location>
</feature>
<feature type="transmembrane region" description="Helical" evidence="2">
    <location>
        <begin position="272"/>
        <end position="292"/>
    </location>
</feature>
<feature type="transmembrane region" description="Helical" evidence="2">
    <location>
        <begin position="319"/>
        <end position="339"/>
    </location>
</feature>
<feature type="transmembrane region" description="Helical" evidence="2">
    <location>
        <begin position="346"/>
        <end position="366"/>
    </location>
</feature>
<feature type="transmembrane region" description="Helical" evidence="2">
    <location>
        <begin position="388"/>
        <end position="408"/>
    </location>
</feature>
<feature type="transmembrane region" description="Helical" evidence="2">
    <location>
        <begin position="417"/>
        <end position="437"/>
    </location>
</feature>
<feature type="transmembrane region" description="Helical" evidence="2">
    <location>
        <begin position="534"/>
        <end position="554"/>
    </location>
</feature>
<feature type="transmembrane region" description="Helical" evidence="2">
    <location>
        <begin position="602"/>
        <end position="622"/>
    </location>
</feature>
<feature type="non-terminal residue">
    <location>
        <position position="1"/>
    </location>
</feature>
<feature type="non-terminal residue">
    <location>
        <position position="702"/>
    </location>
</feature>
<reference key="1">
    <citation type="submission" date="1995-04" db="EMBL/GenBank/DDBJ databases">
        <authorList>
            <person name="Clark L.G."/>
            <person name="Zhang W."/>
            <person name="Wendel J.F."/>
        </authorList>
    </citation>
    <scope>NUCLEOTIDE SEQUENCE [GENOMIC DNA]</scope>
    <source>
        <tissue>Leaf</tissue>
    </source>
</reference>
<proteinExistence type="inferred from homology"/>
<sequence length="702" mass="78719">WVIPLLPLPVIMSMGFGLFFIPTATKNLRRIWAFPSVLFLSIAIVYSVHLSIQQINGSSIYQYLWSWTVNNDFSLEFGYLIDPLTSIMLILITTVGILVLIYSDGYMSHDEGYLRFFVYISFFTTSMLGLVTSSNLIQIYFFWELVGMCSYLLIGFWFTRPIAASACQKAFVTNRVGDFGLLLGILGFFWITGSLEFRDLFKIANNWIPNNGINSLLTTLCAFLLFLGAVAKSAQFPLHVWLPDAMEGPTPISALIHAATMVAAGIFLLARLFPLFISIPLIMTLISLVGTITLFLGATLALAQRDIKRSLAYSTMSQLGYMMLALGIGSYQAALFHLITHAYSKALLFLGSGSVIHSMEPLVGYSPDKSQNMVLMGGLRKYIPITRTTFLWGTLSLCGIPPLACFWSKDEILSNSWLYSPFFGIIASFTAGLTAFYMFRIYLLSFDGYLRVHFQNYSTTKEGSLYSISLWGKKISKGVNRDFVLSRTKNGVSFFSQNRPQIQGNTRNRIGCFSTSFGAKNNFSYPHETGNTMLFPLLILLFFTLFIGFIGISFDNGAMDNGIAELTLLSKWLTPSINLTQESSNSFINSYEFITNAISSVSLAIIGLFIAYILYGSAYSFFQNLNFINSFYKESPKKYFFDQVKKKIYSWSYNRGYIDIFYTRVFTLGIRGLTELTEFFDKGIIDGITNGVGLVSFCIGEG</sequence>
<protein>
    <recommendedName>
        <fullName>NAD(P)H-quinone oxidoreductase subunit 5, chloroplastic</fullName>
        <ecNumber>7.1.1.-</ecNumber>
    </recommendedName>
    <alternativeName>
        <fullName>NAD(P)H dehydrogenase subunit 5</fullName>
    </alternativeName>
    <alternativeName>
        <fullName>NADH-plastoquinone oxidoreductase subunit 5</fullName>
    </alternativeName>
</protein>
<evidence type="ECO:0000250" key="1"/>
<evidence type="ECO:0000255" key="2"/>
<evidence type="ECO:0000305" key="3"/>
<geneLocation type="chloroplast"/>
<comment type="function">
    <text evidence="1">NDH shuttles electrons from NAD(P)H:plastoquinone, via FMN and iron-sulfur (Fe-S) centers, to quinones in the photosynthetic chain and possibly in a chloroplast respiratory chain. The immediate electron acceptor for the enzyme in this species is believed to be plastoquinone. Couples the redox reaction to proton translocation, and thus conserves the redox energy in a proton gradient (By similarity).</text>
</comment>
<comment type="catalytic activity">
    <reaction>
        <text>a plastoquinone + NADH + (n+1) H(+)(in) = a plastoquinol + NAD(+) + n H(+)(out)</text>
        <dbReference type="Rhea" id="RHEA:42608"/>
        <dbReference type="Rhea" id="RHEA-COMP:9561"/>
        <dbReference type="Rhea" id="RHEA-COMP:9562"/>
        <dbReference type="ChEBI" id="CHEBI:15378"/>
        <dbReference type="ChEBI" id="CHEBI:17757"/>
        <dbReference type="ChEBI" id="CHEBI:57540"/>
        <dbReference type="ChEBI" id="CHEBI:57945"/>
        <dbReference type="ChEBI" id="CHEBI:62192"/>
    </reaction>
</comment>
<comment type="catalytic activity">
    <reaction>
        <text>a plastoquinone + NADPH + (n+1) H(+)(in) = a plastoquinol + NADP(+) + n H(+)(out)</text>
        <dbReference type="Rhea" id="RHEA:42612"/>
        <dbReference type="Rhea" id="RHEA-COMP:9561"/>
        <dbReference type="Rhea" id="RHEA-COMP:9562"/>
        <dbReference type="ChEBI" id="CHEBI:15378"/>
        <dbReference type="ChEBI" id="CHEBI:17757"/>
        <dbReference type="ChEBI" id="CHEBI:57783"/>
        <dbReference type="ChEBI" id="CHEBI:58349"/>
        <dbReference type="ChEBI" id="CHEBI:62192"/>
    </reaction>
</comment>
<comment type="subunit">
    <text evidence="1">NDH is composed of at least 16 different subunits, 5 of which are encoded in the nucleus.</text>
</comment>
<comment type="subcellular location">
    <subcellularLocation>
        <location evidence="1">Plastid</location>
        <location evidence="1">Chloroplast thylakoid membrane</location>
        <topology evidence="1">Multi-pass membrane protein</topology>
    </subcellularLocation>
</comment>
<comment type="similarity">
    <text evidence="3">Belongs to the complex I subunit 5 family.</text>
</comment>
<name>NU5C_POAPR</name>
<organism>
    <name type="scientific">Poa pratensis</name>
    <name type="common">Kentucky bluegrass</name>
    <name type="synonym">Phalaris japonica</name>
    <dbReference type="NCBI Taxonomy" id="4545"/>
    <lineage>
        <taxon>Eukaryota</taxon>
        <taxon>Viridiplantae</taxon>
        <taxon>Streptophyta</taxon>
        <taxon>Embryophyta</taxon>
        <taxon>Tracheophyta</taxon>
        <taxon>Spermatophyta</taxon>
        <taxon>Magnoliopsida</taxon>
        <taxon>Liliopsida</taxon>
        <taxon>Poales</taxon>
        <taxon>Poaceae</taxon>
        <taxon>BOP clade</taxon>
        <taxon>Pooideae</taxon>
        <taxon>Poodae</taxon>
        <taxon>Poeae</taxon>
        <taxon>Poeae Chloroplast Group 2 (Poeae type)</taxon>
        <taxon>Poodinae</taxon>
        <taxon>Poinae</taxon>
        <taxon>Poa</taxon>
    </lineage>
</organism>